<organism>
    <name type="scientific">Escherichia coli O139:H28 (strain E24377A / ETEC)</name>
    <dbReference type="NCBI Taxonomy" id="331111"/>
    <lineage>
        <taxon>Bacteria</taxon>
        <taxon>Pseudomonadati</taxon>
        <taxon>Pseudomonadota</taxon>
        <taxon>Gammaproteobacteria</taxon>
        <taxon>Enterobacterales</taxon>
        <taxon>Enterobacteriaceae</taxon>
        <taxon>Escherichia</taxon>
    </lineage>
</organism>
<accession>A7ZIG8</accession>
<sequence length="156" mass="16157">MNIIEANVATPDARVAITIARFNNFINDSLLEGAIDALKRIGQVKDENITVVWVPGAYELPLAAGALAKTGKYDAVIALGTVIRGGTAHFEYVAGGASNGLAHVAQDSEIPVAFGVLTTESIEQAIERAGTKAGNKGAEAALTALEMINVLKAIKA</sequence>
<reference key="1">
    <citation type="journal article" date="2008" name="J. Bacteriol.">
        <title>The pangenome structure of Escherichia coli: comparative genomic analysis of E. coli commensal and pathogenic isolates.</title>
        <authorList>
            <person name="Rasko D.A."/>
            <person name="Rosovitz M.J."/>
            <person name="Myers G.S.A."/>
            <person name="Mongodin E.F."/>
            <person name="Fricke W.F."/>
            <person name="Gajer P."/>
            <person name="Crabtree J."/>
            <person name="Sebaihia M."/>
            <person name="Thomson N.R."/>
            <person name="Chaudhuri R."/>
            <person name="Henderson I.R."/>
            <person name="Sperandio V."/>
            <person name="Ravel J."/>
        </authorList>
    </citation>
    <scope>NUCLEOTIDE SEQUENCE [LARGE SCALE GENOMIC DNA]</scope>
    <source>
        <strain>E24377A / ETEC</strain>
    </source>
</reference>
<feature type="chain" id="PRO_1000058366" description="6,7-dimethyl-8-ribityllumazine synthase">
    <location>
        <begin position="1"/>
        <end position="156"/>
    </location>
</feature>
<feature type="active site" description="Proton donor" evidence="1">
    <location>
        <position position="89"/>
    </location>
</feature>
<feature type="binding site" evidence="1">
    <location>
        <position position="22"/>
    </location>
    <ligand>
        <name>5-amino-6-(D-ribitylamino)uracil</name>
        <dbReference type="ChEBI" id="CHEBI:15934"/>
    </ligand>
</feature>
<feature type="binding site" evidence="1">
    <location>
        <begin position="57"/>
        <end position="59"/>
    </location>
    <ligand>
        <name>5-amino-6-(D-ribitylamino)uracil</name>
        <dbReference type="ChEBI" id="CHEBI:15934"/>
    </ligand>
</feature>
<feature type="binding site" evidence="1">
    <location>
        <begin position="81"/>
        <end position="83"/>
    </location>
    <ligand>
        <name>5-amino-6-(D-ribitylamino)uracil</name>
        <dbReference type="ChEBI" id="CHEBI:15934"/>
    </ligand>
</feature>
<feature type="binding site" evidence="1">
    <location>
        <begin position="86"/>
        <end position="87"/>
    </location>
    <ligand>
        <name>(2S)-2-hydroxy-3-oxobutyl phosphate</name>
        <dbReference type="ChEBI" id="CHEBI:58830"/>
    </ligand>
</feature>
<feature type="binding site" evidence="1">
    <location>
        <position position="114"/>
    </location>
    <ligand>
        <name>5-amino-6-(D-ribitylamino)uracil</name>
        <dbReference type="ChEBI" id="CHEBI:15934"/>
    </ligand>
</feature>
<feature type="binding site" evidence="1">
    <location>
        <position position="128"/>
    </location>
    <ligand>
        <name>(2S)-2-hydroxy-3-oxobutyl phosphate</name>
        <dbReference type="ChEBI" id="CHEBI:58830"/>
    </ligand>
</feature>
<evidence type="ECO:0000255" key="1">
    <source>
        <dbReference type="HAMAP-Rule" id="MF_00178"/>
    </source>
</evidence>
<comment type="function">
    <text evidence="1">Catalyzes the formation of 6,7-dimethyl-8-ribityllumazine by condensation of 5-amino-6-(D-ribitylamino)uracil with 3,4-dihydroxy-2-butanone 4-phosphate. This is the penultimate step in the biosynthesis of riboflavin.</text>
</comment>
<comment type="catalytic activity">
    <reaction evidence="1">
        <text>(2S)-2-hydroxy-3-oxobutyl phosphate + 5-amino-6-(D-ribitylamino)uracil = 6,7-dimethyl-8-(1-D-ribityl)lumazine + phosphate + 2 H2O + H(+)</text>
        <dbReference type="Rhea" id="RHEA:26152"/>
        <dbReference type="ChEBI" id="CHEBI:15377"/>
        <dbReference type="ChEBI" id="CHEBI:15378"/>
        <dbReference type="ChEBI" id="CHEBI:15934"/>
        <dbReference type="ChEBI" id="CHEBI:43474"/>
        <dbReference type="ChEBI" id="CHEBI:58201"/>
        <dbReference type="ChEBI" id="CHEBI:58830"/>
        <dbReference type="EC" id="2.5.1.78"/>
    </reaction>
</comment>
<comment type="pathway">
    <text evidence="1">Cofactor biosynthesis; riboflavin biosynthesis; riboflavin from 2-hydroxy-3-oxobutyl phosphate and 5-amino-6-(D-ribitylamino)uracil: step 1/2.</text>
</comment>
<comment type="subunit">
    <text evidence="1">Forms an icosahedral capsid composed of 60 subunits, arranged as a dodecamer of pentamers.</text>
</comment>
<comment type="similarity">
    <text evidence="1">Belongs to the DMRL synthase family.</text>
</comment>
<gene>
    <name evidence="1" type="primary">ribH</name>
    <name type="ordered locus">EcE24377A_0446</name>
</gene>
<dbReference type="EC" id="2.5.1.78" evidence="1"/>
<dbReference type="EMBL" id="CP000800">
    <property type="protein sequence ID" value="ABV17290.1"/>
    <property type="molecule type" value="Genomic_DNA"/>
</dbReference>
<dbReference type="SMR" id="A7ZIG8"/>
<dbReference type="KEGG" id="ecw:EcE24377A_0446"/>
<dbReference type="HOGENOM" id="CLU_089358_1_1_6"/>
<dbReference type="UniPathway" id="UPA00275">
    <property type="reaction ID" value="UER00404"/>
</dbReference>
<dbReference type="Proteomes" id="UP000001122">
    <property type="component" value="Chromosome"/>
</dbReference>
<dbReference type="GO" id="GO:0005829">
    <property type="term" value="C:cytosol"/>
    <property type="evidence" value="ECO:0007669"/>
    <property type="project" value="TreeGrafter"/>
</dbReference>
<dbReference type="GO" id="GO:0009349">
    <property type="term" value="C:riboflavin synthase complex"/>
    <property type="evidence" value="ECO:0007669"/>
    <property type="project" value="InterPro"/>
</dbReference>
<dbReference type="GO" id="GO:0000906">
    <property type="term" value="F:6,7-dimethyl-8-ribityllumazine synthase activity"/>
    <property type="evidence" value="ECO:0007669"/>
    <property type="project" value="UniProtKB-UniRule"/>
</dbReference>
<dbReference type="GO" id="GO:0009231">
    <property type="term" value="P:riboflavin biosynthetic process"/>
    <property type="evidence" value="ECO:0007669"/>
    <property type="project" value="UniProtKB-UniRule"/>
</dbReference>
<dbReference type="CDD" id="cd09209">
    <property type="entry name" value="Lumazine_synthase-I"/>
    <property type="match status" value="1"/>
</dbReference>
<dbReference type="FunFam" id="3.40.50.960:FF:000001">
    <property type="entry name" value="6,7-dimethyl-8-ribityllumazine synthase"/>
    <property type="match status" value="1"/>
</dbReference>
<dbReference type="Gene3D" id="3.40.50.960">
    <property type="entry name" value="Lumazine/riboflavin synthase"/>
    <property type="match status" value="1"/>
</dbReference>
<dbReference type="HAMAP" id="MF_00178">
    <property type="entry name" value="Lumazine_synth"/>
    <property type="match status" value="1"/>
</dbReference>
<dbReference type="InterPro" id="IPR034964">
    <property type="entry name" value="LS"/>
</dbReference>
<dbReference type="InterPro" id="IPR002180">
    <property type="entry name" value="LS/RS"/>
</dbReference>
<dbReference type="InterPro" id="IPR036467">
    <property type="entry name" value="LS/RS_sf"/>
</dbReference>
<dbReference type="NCBIfam" id="TIGR00114">
    <property type="entry name" value="lumazine-synth"/>
    <property type="match status" value="1"/>
</dbReference>
<dbReference type="NCBIfam" id="NF000812">
    <property type="entry name" value="PRK00061.1-4"/>
    <property type="match status" value="1"/>
</dbReference>
<dbReference type="PANTHER" id="PTHR21058:SF0">
    <property type="entry name" value="6,7-DIMETHYL-8-RIBITYLLUMAZINE SYNTHASE"/>
    <property type="match status" value="1"/>
</dbReference>
<dbReference type="PANTHER" id="PTHR21058">
    <property type="entry name" value="6,7-DIMETHYL-8-RIBITYLLUMAZINE SYNTHASE DMRL SYNTHASE LUMAZINE SYNTHASE"/>
    <property type="match status" value="1"/>
</dbReference>
<dbReference type="Pfam" id="PF00885">
    <property type="entry name" value="DMRL_synthase"/>
    <property type="match status" value="1"/>
</dbReference>
<dbReference type="SUPFAM" id="SSF52121">
    <property type="entry name" value="Lumazine synthase"/>
    <property type="match status" value="1"/>
</dbReference>
<protein>
    <recommendedName>
        <fullName evidence="1">6,7-dimethyl-8-ribityllumazine synthase</fullName>
        <shortName evidence="1">DMRL synthase</shortName>
        <shortName evidence="1">LS</shortName>
        <shortName evidence="1">Lumazine synthase</shortName>
        <ecNumber evidence="1">2.5.1.78</ecNumber>
    </recommendedName>
</protein>
<proteinExistence type="inferred from homology"/>
<keyword id="KW-1185">Reference proteome</keyword>
<keyword id="KW-0686">Riboflavin biosynthesis</keyword>
<keyword id="KW-0808">Transferase</keyword>
<name>RISB_ECO24</name>